<name>MYNN_DANRE</name>
<accession>Q7ZVR6</accession>
<sequence>MPHITHSEFLLEQLKRQRERSFLCDCTVSIGQAQYRAHHNVLAAFSEYFSTQSVDAGREDPTITLDPESVSSAIFEKLLTYIYTGDLNMDREEIESVQKAASYLGMPEVVARCTLSQDNIKNVGSPMRQAEYEDPRSPLSPDDYEPLEPISEVEERELLREDRAGDDLVSMDEAQSSSEQTPQRVGKRGRKPKTRLYEDEFEVETISAQRGRGRGRGRPRGRPRVRPLSSDSTDQSPAHQAMSPNGSSTSRGSGRPRGRPRVRPLSTANEDPRNVEDDPAANKDQEVEKGNEEQKKETGEKDDGKNDTDNPEEVTAFKRGRGRPRIKPVSTEDQTTNSENVTTNAEDGSEPAKTKDSEGTGRKRGRPRSKPVSSEDPESVISVEISGEEAGEETSQDAEKHTEEGTEDSESNPGNSVRISKRKRILSRKLKESQAGDEEEEEEEEMDDEFENDNEDWAGEEEVKPVQDKHRPICNICGNLFSEMSSLRRHMRIHKGLKPYQCTLCTRSFRQGNQLKTHMRIHTGEKPFTCTSCDSRFAQKCQLVYHCRMHHGEEKPYKCEFCGAAFATSSNLKIHIRKHSGEKPYECGECGKRFTQASTLMYHKRRHTGEKPYICDTCGMAFAVSSSLIAHNRKHTGVTPYICLDCGKPCLTAGELRKHMDVHNDIYSLKKHSILKHNVVPELETTQTSKTDPTQCPLNIPIDHQGLIARVRSALVDSQDHEIQMEPPLPILPPETSLTIQQSAEPQMIIQHADGSEPSMIFQHAEASEAPMLIQHGEPGEQVSYVVEQYEIPATAEMEHTQIVIVQTID</sequence>
<organism>
    <name type="scientific">Danio rerio</name>
    <name type="common">Zebrafish</name>
    <name type="synonym">Brachydanio rerio</name>
    <dbReference type="NCBI Taxonomy" id="7955"/>
    <lineage>
        <taxon>Eukaryota</taxon>
        <taxon>Metazoa</taxon>
        <taxon>Chordata</taxon>
        <taxon>Craniata</taxon>
        <taxon>Vertebrata</taxon>
        <taxon>Euteleostomi</taxon>
        <taxon>Actinopterygii</taxon>
        <taxon>Neopterygii</taxon>
        <taxon>Teleostei</taxon>
        <taxon>Ostariophysi</taxon>
        <taxon>Cypriniformes</taxon>
        <taxon>Danionidae</taxon>
        <taxon>Danioninae</taxon>
        <taxon>Danio</taxon>
    </lineage>
</organism>
<proteinExistence type="evidence at transcript level"/>
<comment type="subcellular location">
    <subcellularLocation>
        <location evidence="1">Nucleus</location>
    </subcellularLocation>
</comment>
<comment type="similarity">
    <text evidence="6">Belongs to the krueppel C2H2-type zinc-finger protein family.</text>
</comment>
<gene>
    <name type="primary">mynn</name>
    <name type="ORF">zgc:55724</name>
</gene>
<reference key="1">
    <citation type="submission" date="2003-01" db="EMBL/GenBank/DDBJ databases">
        <authorList>
            <consortium name="NIH - Zebrafish Gene Collection (ZGC) project"/>
        </authorList>
    </citation>
    <scope>NUCLEOTIDE SEQUENCE [LARGE SCALE MRNA]</scope>
    <source>
        <strain>AB</strain>
    </source>
</reference>
<evidence type="ECO:0000250" key="1"/>
<evidence type="ECO:0000255" key="2"/>
<evidence type="ECO:0000255" key="3">
    <source>
        <dbReference type="PROSITE-ProRule" id="PRU00037"/>
    </source>
</evidence>
<evidence type="ECO:0000255" key="4">
    <source>
        <dbReference type="PROSITE-ProRule" id="PRU00042"/>
    </source>
</evidence>
<evidence type="ECO:0000256" key="5">
    <source>
        <dbReference type="SAM" id="MobiDB-lite"/>
    </source>
</evidence>
<evidence type="ECO:0000305" key="6"/>
<feature type="chain" id="PRO_0000248220" description="Myoneurin">
    <location>
        <begin position="1"/>
        <end position="810"/>
    </location>
</feature>
<feature type="domain" description="BTB" evidence="3">
    <location>
        <begin position="24"/>
        <end position="91"/>
    </location>
</feature>
<feature type="DNA-binding region" description="A.T hook 1">
    <location>
        <begin position="254"/>
        <end position="266"/>
    </location>
</feature>
<feature type="DNA-binding region" description="A.T hook 2">
    <location>
        <begin position="318"/>
        <end position="330"/>
    </location>
</feature>
<feature type="DNA-binding region" description="A.T hook 3">
    <location>
        <begin position="361"/>
        <end position="373"/>
    </location>
</feature>
<feature type="zinc finger region" description="C2H2-type 1" evidence="4">
    <location>
        <begin position="472"/>
        <end position="494"/>
    </location>
</feature>
<feature type="zinc finger region" description="C2H2-type 2" evidence="4">
    <location>
        <begin position="500"/>
        <end position="522"/>
    </location>
</feature>
<feature type="zinc finger region" description="C2H2-type 3" evidence="4">
    <location>
        <begin position="528"/>
        <end position="551"/>
    </location>
</feature>
<feature type="zinc finger region" description="C2H2-type 4" evidence="4">
    <location>
        <begin position="557"/>
        <end position="579"/>
    </location>
</feature>
<feature type="zinc finger region" description="C2H2-type 5" evidence="4">
    <location>
        <begin position="585"/>
        <end position="607"/>
    </location>
</feature>
<feature type="zinc finger region" description="C2H2-type 6" evidence="4">
    <location>
        <begin position="613"/>
        <end position="635"/>
    </location>
</feature>
<feature type="zinc finger region" description="C2H2-type 7" evidence="4">
    <location>
        <begin position="641"/>
        <end position="663"/>
    </location>
</feature>
<feature type="region of interest" description="Disordered" evidence="5">
    <location>
        <begin position="122"/>
        <end position="146"/>
    </location>
</feature>
<feature type="region of interest" description="Disordered" evidence="5">
    <location>
        <begin position="169"/>
        <end position="466"/>
    </location>
</feature>
<feature type="short sequence motif" description="Nuclear localization signal" evidence="2">
    <location>
        <begin position="428"/>
        <end position="432"/>
    </location>
</feature>
<feature type="compositionally biased region" description="Polar residues" evidence="5">
    <location>
        <begin position="173"/>
        <end position="183"/>
    </location>
</feature>
<feature type="compositionally biased region" description="Basic residues" evidence="5">
    <location>
        <begin position="185"/>
        <end position="194"/>
    </location>
</feature>
<feature type="compositionally biased region" description="Basic residues" evidence="5">
    <location>
        <begin position="211"/>
        <end position="225"/>
    </location>
</feature>
<feature type="compositionally biased region" description="Polar residues" evidence="5">
    <location>
        <begin position="229"/>
        <end position="238"/>
    </location>
</feature>
<feature type="compositionally biased region" description="Low complexity" evidence="5">
    <location>
        <begin position="243"/>
        <end position="253"/>
    </location>
</feature>
<feature type="compositionally biased region" description="Basic and acidic residues" evidence="5">
    <location>
        <begin position="270"/>
        <end position="308"/>
    </location>
</feature>
<feature type="compositionally biased region" description="Polar residues" evidence="5">
    <location>
        <begin position="331"/>
        <end position="346"/>
    </location>
</feature>
<feature type="compositionally biased region" description="Basic and acidic residues" evidence="5">
    <location>
        <begin position="350"/>
        <end position="361"/>
    </location>
</feature>
<feature type="compositionally biased region" description="Acidic residues" evidence="5">
    <location>
        <begin position="386"/>
        <end position="396"/>
    </location>
</feature>
<feature type="compositionally biased region" description="Basic residues" evidence="5">
    <location>
        <begin position="419"/>
        <end position="428"/>
    </location>
</feature>
<feature type="compositionally biased region" description="Acidic residues" evidence="5">
    <location>
        <begin position="435"/>
        <end position="460"/>
    </location>
</feature>
<keyword id="KW-0238">DNA-binding</keyword>
<keyword id="KW-0479">Metal-binding</keyword>
<keyword id="KW-0539">Nucleus</keyword>
<keyword id="KW-1185">Reference proteome</keyword>
<keyword id="KW-0677">Repeat</keyword>
<keyword id="KW-0804">Transcription</keyword>
<keyword id="KW-0805">Transcription regulation</keyword>
<keyword id="KW-0862">Zinc</keyword>
<keyword id="KW-0863">Zinc-finger</keyword>
<protein>
    <recommendedName>
        <fullName>Myoneurin</fullName>
    </recommendedName>
</protein>
<dbReference type="EMBL" id="BC045441">
    <property type="protein sequence ID" value="AAH45441.1"/>
    <property type="molecule type" value="mRNA"/>
</dbReference>
<dbReference type="RefSeq" id="NP_956062.1">
    <property type="nucleotide sequence ID" value="NM_199768.1"/>
</dbReference>
<dbReference type="SMR" id="Q7ZVR6"/>
<dbReference type="STRING" id="7955.ENSDARP00000016471"/>
<dbReference type="PaxDb" id="7955-ENSDARP00000016471"/>
<dbReference type="GeneID" id="327167"/>
<dbReference type="KEGG" id="dre:327167"/>
<dbReference type="AGR" id="ZFIN:ZDB-GENE-030131-5378"/>
<dbReference type="CTD" id="55892"/>
<dbReference type="ZFIN" id="ZDB-GENE-030131-5378">
    <property type="gene designation" value="mynn"/>
</dbReference>
<dbReference type="eggNOG" id="KOG1721">
    <property type="taxonomic scope" value="Eukaryota"/>
</dbReference>
<dbReference type="InParanoid" id="Q7ZVR6"/>
<dbReference type="OrthoDB" id="427030at2759"/>
<dbReference type="PhylomeDB" id="Q7ZVR6"/>
<dbReference type="PRO" id="PR:Q7ZVR6"/>
<dbReference type="Proteomes" id="UP000000437">
    <property type="component" value="Chromosome 24"/>
</dbReference>
<dbReference type="GO" id="GO:0005654">
    <property type="term" value="C:nucleoplasm"/>
    <property type="evidence" value="ECO:0000318"/>
    <property type="project" value="GO_Central"/>
</dbReference>
<dbReference type="GO" id="GO:0001227">
    <property type="term" value="F:DNA-binding transcription repressor activity, RNA polymerase II-specific"/>
    <property type="evidence" value="ECO:0000318"/>
    <property type="project" value="GO_Central"/>
</dbReference>
<dbReference type="GO" id="GO:0000978">
    <property type="term" value="F:RNA polymerase II cis-regulatory region sequence-specific DNA binding"/>
    <property type="evidence" value="ECO:0000318"/>
    <property type="project" value="GO_Central"/>
</dbReference>
<dbReference type="GO" id="GO:0008270">
    <property type="term" value="F:zinc ion binding"/>
    <property type="evidence" value="ECO:0007669"/>
    <property type="project" value="UniProtKB-KW"/>
</dbReference>
<dbReference type="GO" id="GO:0051216">
    <property type="term" value="P:cartilage development"/>
    <property type="evidence" value="ECO:0000315"/>
    <property type="project" value="ZFIN"/>
</dbReference>
<dbReference type="GO" id="GO:0000122">
    <property type="term" value="P:negative regulation of transcription by RNA polymerase II"/>
    <property type="evidence" value="ECO:0000318"/>
    <property type="project" value="GO_Central"/>
</dbReference>
<dbReference type="GO" id="GO:0030510">
    <property type="term" value="P:regulation of BMP signaling pathway"/>
    <property type="evidence" value="ECO:0000315"/>
    <property type="project" value="ZFIN"/>
</dbReference>
<dbReference type="GO" id="GO:0001817">
    <property type="term" value="P:regulation of cytokine production"/>
    <property type="evidence" value="ECO:0000318"/>
    <property type="project" value="GO_Central"/>
</dbReference>
<dbReference type="GO" id="GO:0002682">
    <property type="term" value="P:regulation of immune system process"/>
    <property type="evidence" value="ECO:0000318"/>
    <property type="project" value="GO_Central"/>
</dbReference>
<dbReference type="CDD" id="cd18217">
    <property type="entry name" value="BTB_POZ_ZBTB31_myoneurin"/>
    <property type="match status" value="1"/>
</dbReference>
<dbReference type="FunFam" id="3.30.160.60:FF:001485">
    <property type="entry name" value="Krueppel-related zinc finger protein"/>
    <property type="match status" value="1"/>
</dbReference>
<dbReference type="FunFam" id="3.30.160.60:FF:000478">
    <property type="entry name" value="Zinc finger protein 133"/>
    <property type="match status" value="1"/>
</dbReference>
<dbReference type="FunFam" id="3.30.160.60:FF:001049">
    <property type="entry name" value="zinc finger protein 319"/>
    <property type="match status" value="1"/>
</dbReference>
<dbReference type="FunFam" id="3.30.160.60:FF:001443">
    <property type="entry name" value="Zinc finger protein 668"/>
    <property type="match status" value="1"/>
</dbReference>
<dbReference type="FunFam" id="3.30.160.60:FF:000176">
    <property type="entry name" value="zinc finger protein 70"/>
    <property type="match status" value="1"/>
</dbReference>
<dbReference type="Gene3D" id="3.30.160.60">
    <property type="entry name" value="Classic Zinc Finger"/>
    <property type="match status" value="7"/>
</dbReference>
<dbReference type="Gene3D" id="3.30.710.10">
    <property type="entry name" value="Potassium Channel Kv1.1, Chain A"/>
    <property type="match status" value="1"/>
</dbReference>
<dbReference type="InterPro" id="IPR017956">
    <property type="entry name" value="AT_hook_DNA-bd_motif"/>
</dbReference>
<dbReference type="InterPro" id="IPR000210">
    <property type="entry name" value="BTB/POZ_dom"/>
</dbReference>
<dbReference type="InterPro" id="IPR000637">
    <property type="entry name" value="HMGI/Y_DNA-bd_CS"/>
</dbReference>
<dbReference type="InterPro" id="IPR011333">
    <property type="entry name" value="SKP1/BTB/POZ_sf"/>
</dbReference>
<dbReference type="InterPro" id="IPR036236">
    <property type="entry name" value="Znf_C2H2_sf"/>
</dbReference>
<dbReference type="InterPro" id="IPR013087">
    <property type="entry name" value="Znf_C2H2_type"/>
</dbReference>
<dbReference type="PANTHER" id="PTHR24394">
    <property type="entry name" value="ZINC FINGER PROTEIN"/>
    <property type="match status" value="1"/>
</dbReference>
<dbReference type="PANTHER" id="PTHR24394:SF44">
    <property type="entry name" value="ZINC FINGER PROTEIN 271-LIKE"/>
    <property type="match status" value="1"/>
</dbReference>
<dbReference type="Pfam" id="PF00651">
    <property type="entry name" value="BTB"/>
    <property type="match status" value="1"/>
</dbReference>
<dbReference type="Pfam" id="PF00096">
    <property type="entry name" value="zf-C2H2"/>
    <property type="match status" value="5"/>
</dbReference>
<dbReference type="PRINTS" id="PR00929">
    <property type="entry name" value="ATHOOK"/>
</dbReference>
<dbReference type="SMART" id="SM00225">
    <property type="entry name" value="BTB"/>
    <property type="match status" value="1"/>
</dbReference>
<dbReference type="SMART" id="SM00355">
    <property type="entry name" value="ZnF_C2H2"/>
    <property type="match status" value="7"/>
</dbReference>
<dbReference type="SUPFAM" id="SSF57667">
    <property type="entry name" value="beta-beta-alpha zinc fingers"/>
    <property type="match status" value="4"/>
</dbReference>
<dbReference type="SUPFAM" id="SSF54695">
    <property type="entry name" value="POZ domain"/>
    <property type="match status" value="1"/>
</dbReference>
<dbReference type="PROSITE" id="PS50097">
    <property type="entry name" value="BTB"/>
    <property type="match status" value="1"/>
</dbReference>
<dbReference type="PROSITE" id="PS00354">
    <property type="entry name" value="HMGI_Y"/>
    <property type="match status" value="1"/>
</dbReference>
<dbReference type="PROSITE" id="PS00028">
    <property type="entry name" value="ZINC_FINGER_C2H2_1"/>
    <property type="match status" value="7"/>
</dbReference>
<dbReference type="PROSITE" id="PS50157">
    <property type="entry name" value="ZINC_FINGER_C2H2_2"/>
    <property type="match status" value="7"/>
</dbReference>